<reference key="1">
    <citation type="journal article" date="1997" name="Science">
        <title>The complete genome sequence of Escherichia coli K-12.</title>
        <authorList>
            <person name="Blattner F.R."/>
            <person name="Plunkett G. III"/>
            <person name="Bloch C.A."/>
            <person name="Perna N.T."/>
            <person name="Burland V."/>
            <person name="Riley M."/>
            <person name="Collado-Vides J."/>
            <person name="Glasner J.D."/>
            <person name="Rode C.K."/>
            <person name="Mayhew G.F."/>
            <person name="Gregor J."/>
            <person name="Davis N.W."/>
            <person name="Kirkpatrick H.A."/>
            <person name="Goeden M.A."/>
            <person name="Rose D.J."/>
            <person name="Mau B."/>
            <person name="Shao Y."/>
        </authorList>
    </citation>
    <scope>NUCLEOTIDE SEQUENCE [LARGE SCALE GENOMIC DNA]</scope>
    <source>
        <strain>K12 / MG1655 / ATCC 47076</strain>
    </source>
</reference>
<reference key="2">
    <citation type="journal article" date="2019" name="MBio">
        <title>Identifying small proteins by ribosome profiling with stalled initiation complexes.</title>
        <authorList>
            <person name="Weaver J."/>
            <person name="Mohammad F."/>
            <person name="Buskirk A.R."/>
            <person name="Storz G."/>
        </authorList>
    </citation>
    <scope>IDENTIFICATION</scope>
    <scope>INDUCTION</scope>
    <source>
        <strain>K12 / MG1655 / ATCC 47076</strain>
    </source>
</reference>
<dbReference type="EMBL" id="U00096">
    <property type="protein sequence ID" value="QNV50525.1"/>
    <property type="molecule type" value="Genomic_DNA"/>
</dbReference>
<dbReference type="InParanoid" id="P0DSF0"/>
<dbReference type="BioCyc" id="EcoCyc:MONOMER0-4484"/>
<dbReference type="Proteomes" id="UP000000625">
    <property type="component" value="Chromosome"/>
</dbReference>
<dbReference type="Pfam" id="PF23497">
    <property type="entry name" value="YmiD"/>
    <property type="match status" value="1"/>
</dbReference>
<comment type="induction">
    <text evidence="1">Expressed in both exponential and stationary phase in rich medium; expression is higher in exponential phase (at protein level).</text>
</comment>
<gene>
    <name evidence="2" type="primary">ymiD</name>
    <name evidence="3" type="ordered locus">b4772</name>
</gene>
<keyword id="KW-1185">Reference proteome</keyword>
<feature type="chain" id="PRO_0000447156" description="Protein YmiD">
    <location>
        <begin position="1"/>
        <end position="42"/>
    </location>
</feature>
<evidence type="ECO:0000269" key="1">
    <source>
    </source>
</evidence>
<evidence type="ECO:0000303" key="2">
    <source>
    </source>
</evidence>
<evidence type="ECO:0000312" key="3">
    <source>
        <dbReference type="EMBL" id="QNV50525.1"/>
    </source>
</evidence>
<protein>
    <recommendedName>
        <fullName evidence="2">Protein YmiD</fullName>
    </recommendedName>
</protein>
<name>YMID_ECOLI</name>
<proteinExistence type="evidence at protein level"/>
<accession>P0DSF0</accession>
<accession>A0A7H2C778</accession>
<sequence>MQKLPLKEKCLTATANYHPGIRYIMTGYSAKYIYSSTYARFR</sequence>
<organism>
    <name type="scientific">Escherichia coli (strain K12)</name>
    <dbReference type="NCBI Taxonomy" id="83333"/>
    <lineage>
        <taxon>Bacteria</taxon>
        <taxon>Pseudomonadati</taxon>
        <taxon>Pseudomonadota</taxon>
        <taxon>Gammaproteobacteria</taxon>
        <taxon>Enterobacterales</taxon>
        <taxon>Enterobacteriaceae</taxon>
        <taxon>Escherichia</taxon>
    </lineage>
</organism>